<protein>
    <recommendedName>
        <fullName>Ciliary neurotrophic factor receptor subunit alpha</fullName>
        <shortName>CNTF receptor subunit alpha</shortName>
        <shortName>CNTFR-alpha</shortName>
    </recommendedName>
</protein>
<keyword id="KW-1003">Cell membrane</keyword>
<keyword id="KW-1015">Disulfide bond</keyword>
<keyword id="KW-0325">Glycoprotein</keyword>
<keyword id="KW-0336">GPI-anchor</keyword>
<keyword id="KW-0393">Immunoglobulin domain</keyword>
<keyword id="KW-0449">Lipoprotein</keyword>
<keyword id="KW-0472">Membrane</keyword>
<keyword id="KW-0675">Receptor</keyword>
<keyword id="KW-1185">Reference proteome</keyword>
<keyword id="KW-0677">Repeat</keyword>
<keyword id="KW-0732">Signal</keyword>
<dbReference type="EMBL" id="AF529215">
    <property type="protein sequence ID" value="AAQ09101.1"/>
    <property type="molecule type" value="mRNA"/>
</dbReference>
<dbReference type="RefSeq" id="NP_001003353.1">
    <property type="nucleotide sequence ID" value="NM_001003353.1"/>
</dbReference>
<dbReference type="RefSeq" id="XP_005626431.1">
    <property type="nucleotide sequence ID" value="XM_005626374.2"/>
</dbReference>
<dbReference type="RefSeq" id="XP_005626433.1">
    <property type="nucleotide sequence ID" value="XM_005626376.2"/>
</dbReference>
<dbReference type="RefSeq" id="XP_005626434.1">
    <property type="nucleotide sequence ID" value="XM_005626377.2"/>
</dbReference>
<dbReference type="RefSeq" id="XP_013973126.1">
    <property type="nucleotide sequence ID" value="XM_014117651.1"/>
</dbReference>
<dbReference type="RefSeq" id="XP_038536835.1">
    <property type="nucleotide sequence ID" value="XM_038680907.1"/>
</dbReference>
<dbReference type="RefSeq" id="XP_038536836.1">
    <property type="nucleotide sequence ID" value="XM_038680908.1"/>
</dbReference>
<dbReference type="RefSeq" id="XP_038536837.1">
    <property type="nucleotide sequence ID" value="XM_038680909.1"/>
</dbReference>
<dbReference type="RefSeq" id="XP_038536838.1">
    <property type="nucleotide sequence ID" value="XM_038680910.1"/>
</dbReference>
<dbReference type="RefSeq" id="XP_038536839.1">
    <property type="nucleotide sequence ID" value="XM_038680911.1"/>
</dbReference>
<dbReference type="BMRB" id="Q71DR4"/>
<dbReference type="SMR" id="Q71DR4"/>
<dbReference type="FunCoup" id="Q71DR4">
    <property type="interactions" value="177"/>
</dbReference>
<dbReference type="STRING" id="9615.ENSCAFP00000002838"/>
<dbReference type="GlyCosmos" id="Q71DR4">
    <property type="glycosylation" value="4 sites, No reported glycans"/>
</dbReference>
<dbReference type="PaxDb" id="9612-ENSCAFP00000002838"/>
<dbReference type="Ensembl" id="ENSCAFT00040016416.1">
    <property type="protein sequence ID" value="ENSCAFP00040014222.1"/>
    <property type="gene ID" value="ENSCAFG00040008832.1"/>
</dbReference>
<dbReference type="Ensembl" id="ENSCAFT00845042894.1">
    <property type="protein sequence ID" value="ENSCAFP00845033622.1"/>
    <property type="gene ID" value="ENSCAFG00845024273.1"/>
</dbReference>
<dbReference type="GeneID" id="442941"/>
<dbReference type="KEGG" id="cfa:442941"/>
<dbReference type="CTD" id="1271"/>
<dbReference type="VEuPathDB" id="HostDB:ENSCAFG00845024273"/>
<dbReference type="eggNOG" id="ENOG502QUDK">
    <property type="taxonomic scope" value="Eukaryota"/>
</dbReference>
<dbReference type="GeneTree" id="ENSGT00940000158864"/>
<dbReference type="HOGENOM" id="CLU_047259_0_0_1"/>
<dbReference type="InParanoid" id="Q71DR4"/>
<dbReference type="OMA" id="KICDTGE"/>
<dbReference type="OrthoDB" id="9927622at2759"/>
<dbReference type="TreeFam" id="TF331210"/>
<dbReference type="Reactome" id="R-CFA-6788467">
    <property type="pathway name" value="IL-6-type cytokine receptor ligand interactions"/>
</dbReference>
<dbReference type="Proteomes" id="UP000002254">
    <property type="component" value="Unplaced"/>
</dbReference>
<dbReference type="Proteomes" id="UP000694429">
    <property type="component" value="Unplaced"/>
</dbReference>
<dbReference type="Proteomes" id="UP000694542">
    <property type="component" value="Chromosome 11"/>
</dbReference>
<dbReference type="Proteomes" id="UP000805418">
    <property type="component" value="Chromosome 11"/>
</dbReference>
<dbReference type="Bgee" id="ENSCAFG00000001932">
    <property type="expression patterns" value="Expressed in thymus and 45 other cell types or tissues"/>
</dbReference>
<dbReference type="GO" id="GO:0070110">
    <property type="term" value="C:ciliary neurotrophic factor receptor complex"/>
    <property type="evidence" value="ECO:0000318"/>
    <property type="project" value="GO_Central"/>
</dbReference>
<dbReference type="GO" id="GO:0097059">
    <property type="term" value="C:CNTFR-CLCF1 complex"/>
    <property type="evidence" value="ECO:0000318"/>
    <property type="project" value="GO_Central"/>
</dbReference>
<dbReference type="GO" id="GO:0009897">
    <property type="term" value="C:external side of plasma membrane"/>
    <property type="evidence" value="ECO:0000318"/>
    <property type="project" value="GO_Central"/>
</dbReference>
<dbReference type="GO" id="GO:0019970">
    <property type="term" value="F:interleukin-11 binding"/>
    <property type="evidence" value="ECO:0000318"/>
    <property type="project" value="GO_Central"/>
</dbReference>
<dbReference type="GO" id="GO:0004921">
    <property type="term" value="F:interleukin-11 receptor activity"/>
    <property type="evidence" value="ECO:0000318"/>
    <property type="project" value="GO_Central"/>
</dbReference>
<dbReference type="GO" id="GO:0070120">
    <property type="term" value="P:ciliary neurotrophic factor-mediated signaling pathway"/>
    <property type="evidence" value="ECO:0000318"/>
    <property type="project" value="GO_Central"/>
</dbReference>
<dbReference type="GO" id="GO:0008284">
    <property type="term" value="P:positive regulation of cell population proliferation"/>
    <property type="evidence" value="ECO:0000318"/>
    <property type="project" value="GO_Central"/>
</dbReference>
<dbReference type="CDD" id="cd00063">
    <property type="entry name" value="FN3"/>
    <property type="match status" value="1"/>
</dbReference>
<dbReference type="FunFam" id="2.60.40.10:FF:000136">
    <property type="entry name" value="Ciliary neurotrophic factor receptor alpha"/>
    <property type="match status" value="1"/>
</dbReference>
<dbReference type="FunFam" id="2.60.40.10:FF:000564">
    <property type="entry name" value="Ciliary neurotrophic factor receptor subunit alpha"/>
    <property type="match status" value="1"/>
</dbReference>
<dbReference type="FunFam" id="2.60.40.10:FF:000944">
    <property type="entry name" value="Ciliary neurotrophic factor receptor subunit alpha"/>
    <property type="match status" value="1"/>
</dbReference>
<dbReference type="Gene3D" id="2.60.40.10">
    <property type="entry name" value="Immunoglobulins"/>
    <property type="match status" value="3"/>
</dbReference>
<dbReference type="InterPro" id="IPR003961">
    <property type="entry name" value="FN3_dom"/>
</dbReference>
<dbReference type="InterPro" id="IPR036116">
    <property type="entry name" value="FN3_sf"/>
</dbReference>
<dbReference type="InterPro" id="IPR003530">
    <property type="entry name" value="Hematopoietin_rcpt_L_F3_CS"/>
</dbReference>
<dbReference type="InterPro" id="IPR007110">
    <property type="entry name" value="Ig-like_dom"/>
</dbReference>
<dbReference type="InterPro" id="IPR036179">
    <property type="entry name" value="Ig-like_dom_sf"/>
</dbReference>
<dbReference type="InterPro" id="IPR013783">
    <property type="entry name" value="Ig-like_fold"/>
</dbReference>
<dbReference type="InterPro" id="IPR003599">
    <property type="entry name" value="Ig_sub"/>
</dbReference>
<dbReference type="InterPro" id="IPR003598">
    <property type="entry name" value="Ig_sub2"/>
</dbReference>
<dbReference type="InterPro" id="IPR050379">
    <property type="entry name" value="Type-I_Cytokine_Rcpt"/>
</dbReference>
<dbReference type="PANTHER" id="PTHR23036:SF21">
    <property type="entry name" value="CILIARY NEUROTROPHIC FACTOR RECEPTOR SUBUNIT ALPHA"/>
    <property type="match status" value="1"/>
</dbReference>
<dbReference type="PANTHER" id="PTHR23036">
    <property type="entry name" value="CYTOKINE RECEPTOR"/>
    <property type="match status" value="1"/>
</dbReference>
<dbReference type="Pfam" id="PF00041">
    <property type="entry name" value="fn3"/>
    <property type="match status" value="1"/>
</dbReference>
<dbReference type="SMART" id="SM00060">
    <property type="entry name" value="FN3"/>
    <property type="match status" value="1"/>
</dbReference>
<dbReference type="SMART" id="SM00409">
    <property type="entry name" value="IG"/>
    <property type="match status" value="1"/>
</dbReference>
<dbReference type="SMART" id="SM00408">
    <property type="entry name" value="IGc2"/>
    <property type="match status" value="1"/>
</dbReference>
<dbReference type="SUPFAM" id="SSF49265">
    <property type="entry name" value="Fibronectin type III"/>
    <property type="match status" value="2"/>
</dbReference>
<dbReference type="SUPFAM" id="SSF48726">
    <property type="entry name" value="Immunoglobulin"/>
    <property type="match status" value="1"/>
</dbReference>
<dbReference type="PROSITE" id="PS50853">
    <property type="entry name" value="FN3"/>
    <property type="match status" value="2"/>
</dbReference>
<dbReference type="PROSITE" id="PS01354">
    <property type="entry name" value="HEMATOPO_REC_L_F3"/>
    <property type="match status" value="1"/>
</dbReference>
<dbReference type="PROSITE" id="PS50835">
    <property type="entry name" value="IG_LIKE"/>
    <property type="match status" value="1"/>
</dbReference>
<organism>
    <name type="scientific">Canis lupus familiaris</name>
    <name type="common">Dog</name>
    <name type="synonym">Canis familiaris</name>
    <dbReference type="NCBI Taxonomy" id="9615"/>
    <lineage>
        <taxon>Eukaryota</taxon>
        <taxon>Metazoa</taxon>
        <taxon>Chordata</taxon>
        <taxon>Craniata</taxon>
        <taxon>Vertebrata</taxon>
        <taxon>Euteleostomi</taxon>
        <taxon>Mammalia</taxon>
        <taxon>Eutheria</taxon>
        <taxon>Laurasiatheria</taxon>
        <taxon>Carnivora</taxon>
        <taxon>Caniformia</taxon>
        <taxon>Canidae</taxon>
        <taxon>Canis</taxon>
    </lineage>
</organism>
<proteinExistence type="evidence at transcript level"/>
<name>CNTFR_CANLF</name>
<reference key="1">
    <citation type="journal article" date="2003" name="Invest. Ophthalmol. Vis. Sci.">
        <title>Cloning, mapping, and retinal expression of the canine ciliary neurotrophic factor receptor alpha (CNTFRalpha).</title>
        <authorList>
            <person name="Beltran W.A."/>
            <person name="Zhang Q."/>
            <person name="Kijas J.W."/>
            <person name="Gu D."/>
            <person name="Rohrer H."/>
            <person name="Jordan J.A."/>
            <person name="Aguirre G.D."/>
        </authorList>
    </citation>
    <scope>NUCLEOTIDE SEQUENCE [MRNA]</scope>
    <scope>TISSUE SPECIFICITY</scope>
</reference>
<feature type="signal peptide" evidence="3">
    <location>
        <begin position="1"/>
        <end position="22"/>
    </location>
</feature>
<feature type="chain" id="PRO_0000010989" description="Ciliary neurotrophic factor receptor subunit alpha">
    <location>
        <begin position="23"/>
        <end position="342"/>
    </location>
</feature>
<feature type="propeptide" id="PRO_0000010990" description="Removed in mature form" evidence="3">
    <location>
        <begin position="343"/>
        <end position="372"/>
    </location>
</feature>
<feature type="domain" description="Ig-like C2-type">
    <location>
        <begin position="27"/>
        <end position="104"/>
    </location>
</feature>
<feature type="domain" description="Fibronectin type-III 1" evidence="5">
    <location>
        <begin position="108"/>
        <end position="205"/>
    </location>
</feature>
<feature type="domain" description="Fibronectin type-III 2" evidence="5">
    <location>
        <begin position="206"/>
        <end position="306"/>
    </location>
</feature>
<feature type="region of interest" description="Disordered" evidence="6">
    <location>
        <begin position="301"/>
        <end position="340"/>
    </location>
</feature>
<feature type="short sequence motif" description="WSXWS motif">
    <location>
        <begin position="290"/>
        <end position="294"/>
    </location>
</feature>
<feature type="compositionally biased region" description="Low complexity" evidence="6">
    <location>
        <begin position="311"/>
        <end position="326"/>
    </location>
</feature>
<feature type="lipid moiety-binding region" description="GPI-anchor amidated serine" evidence="3">
    <location>
        <position position="342"/>
    </location>
</feature>
<feature type="glycosylation site" description="N-linked (GlcNAc...) asparagine" evidence="3">
    <location>
        <position position="60"/>
    </location>
</feature>
<feature type="glycosylation site" description="N-linked (GlcNAc...) asparagine" evidence="3">
    <location>
        <position position="70"/>
    </location>
</feature>
<feature type="glycosylation site" description="N-linked (GlcNAc...) asparagine" evidence="3">
    <location>
        <position position="142"/>
    </location>
</feature>
<feature type="glycosylation site" description="N-linked (GlcNAc...) asparagine" evidence="3">
    <location>
        <position position="190"/>
    </location>
</feature>
<feature type="disulfide bond" evidence="4">
    <location>
        <begin position="46"/>
        <end position="89"/>
    </location>
</feature>
<comment type="function">
    <text evidence="1">Binds to CNTF. The alpha subunit provides the receptor specificity (By similarity).</text>
</comment>
<comment type="subunit">
    <text evidence="2">Forms a heterotrimer with LIFR and IL6ST. Interacts with heterodimeric neurotropic cytokine composed of CLCF1/CLC and CRLF1/CLF-1. Either alone or in complex with the heterodimer CLCF1-CRLF1 interacts with SORL1; this interaction may promote internalization and lysosomal degradation.</text>
</comment>
<comment type="subcellular location">
    <subcellularLocation>
        <location evidence="1">Cell membrane</location>
        <topology evidence="1">Lipid-anchor</topology>
        <topology evidence="1">GPI-anchor</topology>
    </subcellularLocation>
</comment>
<comment type="tissue specificity">
    <text evidence="7">Expressed in retina, brain, spleen, lung, liver and kidney. In the retina it is highly expressed by photoreceptors, but also found in the RPE, inner nuclear layer and ganglion cells.</text>
</comment>
<comment type="domain">
    <text evidence="1">The WSXWS motif appears to be necessary for proper protein folding and thereby efficient intracellular transport and cell-surface receptor binding.</text>
</comment>
<comment type="similarity">
    <text evidence="8">Belongs to the type I cytokine receptor family. Type 3 subfamily.</text>
</comment>
<gene>
    <name type="primary">CNTFR</name>
</gene>
<sequence>MAAPVPWACCAVLAAAAAVVYAQRHSPQEAPHVQYERLGSDVTLPCGTANWDAAVTWRVNGTDLALDLLNGSQLVLHGLELGHSGLYACFHRDSWHLRHQVLLHVGLPPREPVLSCRSNTYPKGFYCSWHLPTPTYIPNTFNVTVLHGSKIMVCEKDPALKNRCHIRYMHLFSTIKYKVSISVSNALGHNATAITFDEFTIVKPDPPENVVARPVPSNPRRLEVTWQTPSTWPDPESFPLKFFLRYRPLILDQWQHVELSDGTTHTITDAYAGKEYIIQVAAKDYEIGTWSDWSVAAHATPWTEEPRHLTTEAQAPETTTSTTSSLAPPPTTKICDPGELGSGGGPSAPFLIHVPVTLALAAAAATANSLLI</sequence>
<accession>Q71DR4</accession>
<evidence type="ECO:0000250" key="1"/>
<evidence type="ECO:0000250" key="2">
    <source>
        <dbReference type="UniProtKB" id="P26992"/>
    </source>
</evidence>
<evidence type="ECO:0000255" key="3"/>
<evidence type="ECO:0000255" key="4">
    <source>
        <dbReference type="PROSITE-ProRule" id="PRU00114"/>
    </source>
</evidence>
<evidence type="ECO:0000255" key="5">
    <source>
        <dbReference type="PROSITE-ProRule" id="PRU00316"/>
    </source>
</evidence>
<evidence type="ECO:0000256" key="6">
    <source>
        <dbReference type="SAM" id="MobiDB-lite"/>
    </source>
</evidence>
<evidence type="ECO:0000269" key="7">
    <source>
    </source>
</evidence>
<evidence type="ECO:0000305" key="8"/>